<feature type="transit peptide" description="Mitochondrion" evidence="1">
    <location>
        <begin position="1"/>
        <end status="unknown"/>
    </location>
</feature>
<feature type="chain" id="PRO_0000019702" description="NifU-like protein, mitochondrial">
    <location>
        <begin status="unknown"/>
        <end position="256"/>
    </location>
</feature>
<feature type="short sequence motif" description="CxxC motif" evidence="6">
    <location>
        <begin position="196"/>
        <end position="199"/>
    </location>
</feature>
<feature type="mutagenesis site" description="Dominant negative mutant; cells show a severe synthetic sick phenotype on glycerol/lactate medium." evidence="4">
    <original>G</original>
    <variation>C</variation>
    <location>
        <position position="194"/>
    </location>
</feature>
<feature type="mutagenesis site" description="Loss of function. Abolished homodimerization." evidence="4">
    <original>CTSC</original>
    <variation>ATSA</variation>
    <location>
        <begin position="196"/>
        <end position="199"/>
    </location>
</feature>
<feature type="strand" evidence="7">
    <location>
        <begin position="24"/>
        <end position="27"/>
    </location>
</feature>
<feature type="strand" evidence="7">
    <location>
        <begin position="32"/>
        <end position="39"/>
    </location>
</feature>
<feature type="strand" evidence="7">
    <location>
        <begin position="53"/>
        <end position="58"/>
    </location>
</feature>
<feature type="helix" evidence="7">
    <location>
        <begin position="60"/>
        <end position="65"/>
    </location>
</feature>
<feature type="helix" evidence="7">
    <location>
        <begin position="67"/>
        <end position="75"/>
    </location>
</feature>
<feature type="strand" evidence="7">
    <location>
        <begin position="79"/>
        <end position="84"/>
    </location>
</feature>
<feature type="strand" evidence="7">
    <location>
        <begin position="86"/>
        <end position="93"/>
    </location>
</feature>
<feature type="helix" evidence="7">
    <location>
        <begin position="99"/>
        <end position="116"/>
    </location>
</feature>
<feature type="strand" evidence="7">
    <location>
        <begin position="118"/>
        <end position="122"/>
    </location>
</feature>
<sequence length="256" mass="29174">MFKSVAKLGKSPIFYLNSQRLIHIKTLTTPNENALKFLSTDGEMLQTRGSKSIVIKNTDENLINHSKLAQQIFLQCPGVESLMIGDDFLTINKDRMVHWNSIKPEIIDLLTKQLAYGEDVISKEFHAVQEEEGEGGYKINMPKFELTEEDEEVSELIEELIDTRIRPAILEDGGDIDYRGWDPKTGTVYLRLQGACTSCSSSEVTLKYGIESMLKHYVDEVKEVIQIMDPEQEIALKEFDKLEKKLESSKNTSHEK</sequence>
<name>NFU1_YEAST</name>
<proteinExistence type="evidence at protein level"/>
<organism>
    <name type="scientific">Saccharomyces cerevisiae (strain ATCC 204508 / S288c)</name>
    <name type="common">Baker's yeast</name>
    <dbReference type="NCBI Taxonomy" id="559292"/>
    <lineage>
        <taxon>Eukaryota</taxon>
        <taxon>Fungi</taxon>
        <taxon>Dikarya</taxon>
        <taxon>Ascomycota</taxon>
        <taxon>Saccharomycotina</taxon>
        <taxon>Saccharomycetes</taxon>
        <taxon>Saccharomycetales</taxon>
        <taxon>Saccharomycetaceae</taxon>
        <taxon>Saccharomyces</taxon>
    </lineage>
</organism>
<evidence type="ECO:0000255" key="1"/>
<evidence type="ECO:0000269" key="2">
    <source>
    </source>
</evidence>
<evidence type="ECO:0000269" key="3">
    <source>
    </source>
</evidence>
<evidence type="ECO:0000269" key="4">
    <source>
    </source>
</evidence>
<evidence type="ECO:0000305" key="5"/>
<evidence type="ECO:0000305" key="6">
    <source>
    </source>
</evidence>
<evidence type="ECO:0007829" key="7">
    <source>
        <dbReference type="PDB" id="2LTL"/>
    </source>
</evidence>
<accession>P32860</accession>
<accession>D6VXP6</accession>
<protein>
    <recommendedName>
        <fullName>NifU-like protein, mitochondrial</fullName>
    </recommendedName>
</protein>
<reference key="1">
    <citation type="journal article" date="1993" name="Yeast">
        <title>The sequence of a 17.5 kb DNA fragment on the left arm of yeast chromosome XI identifies the protein kinase gene ELM1, the DNA primase gene PRI2, a new gene encoding a putative histone and seven new open reading frames.</title>
        <authorList>
            <person name="Purnelle B."/>
            <person name="Tettelin H."/>
            <person name="van Dyck L."/>
            <person name="Skala J."/>
            <person name="Goffeau A."/>
        </authorList>
    </citation>
    <scope>NUCLEOTIDE SEQUENCE [GENOMIC DNA]</scope>
    <source>
        <strain>ATCC 204508 / S288c</strain>
    </source>
</reference>
<reference key="2">
    <citation type="journal article" date="1994" name="Nature">
        <title>Complete DNA sequence of yeast chromosome XI.</title>
        <authorList>
            <person name="Dujon B."/>
            <person name="Alexandraki D."/>
            <person name="Andre B."/>
            <person name="Ansorge W."/>
            <person name="Baladron V."/>
            <person name="Ballesta J.P.G."/>
            <person name="Banrevi A."/>
            <person name="Bolle P.-A."/>
            <person name="Bolotin-Fukuhara M."/>
            <person name="Bossier P."/>
            <person name="Bou G."/>
            <person name="Boyer J."/>
            <person name="Buitrago M.J."/>
            <person name="Cheret G."/>
            <person name="Colleaux L."/>
            <person name="Daignan-Fornier B."/>
            <person name="del Rey F."/>
            <person name="Dion C."/>
            <person name="Domdey H."/>
            <person name="Duesterhoeft A."/>
            <person name="Duesterhus S."/>
            <person name="Entian K.-D."/>
            <person name="Erfle H."/>
            <person name="Esteban P.F."/>
            <person name="Feldmann H."/>
            <person name="Fernandes L."/>
            <person name="Fobo G.M."/>
            <person name="Fritz C."/>
            <person name="Fukuhara H."/>
            <person name="Gabel C."/>
            <person name="Gaillon L."/>
            <person name="Garcia-Cantalejo J.M."/>
            <person name="Garcia-Ramirez J.J."/>
            <person name="Gent M.E."/>
            <person name="Ghazvini M."/>
            <person name="Goffeau A."/>
            <person name="Gonzalez A."/>
            <person name="Grothues D."/>
            <person name="Guerreiro P."/>
            <person name="Hegemann J.H."/>
            <person name="Hewitt N."/>
            <person name="Hilger F."/>
            <person name="Hollenberg C.P."/>
            <person name="Horaitis O."/>
            <person name="Indge K.J."/>
            <person name="Jacquier A."/>
            <person name="James C.M."/>
            <person name="Jauniaux J.-C."/>
            <person name="Jimenez A."/>
            <person name="Keuchel H."/>
            <person name="Kirchrath L."/>
            <person name="Kleine K."/>
            <person name="Koetter P."/>
            <person name="Legrain P."/>
            <person name="Liebl S."/>
            <person name="Louis E.J."/>
            <person name="Maia e Silva A."/>
            <person name="Marck C."/>
            <person name="Monnier A.-L."/>
            <person name="Moestl D."/>
            <person name="Mueller S."/>
            <person name="Obermaier B."/>
            <person name="Oliver S.G."/>
            <person name="Pallier C."/>
            <person name="Pascolo S."/>
            <person name="Pfeiffer F."/>
            <person name="Philippsen P."/>
            <person name="Planta R.J."/>
            <person name="Pohl F.M."/>
            <person name="Pohl T.M."/>
            <person name="Poehlmann R."/>
            <person name="Portetelle D."/>
            <person name="Purnelle B."/>
            <person name="Puzos V."/>
            <person name="Ramezani Rad M."/>
            <person name="Rasmussen S.W."/>
            <person name="Remacha M.A."/>
            <person name="Revuelta J.L."/>
            <person name="Richard G.-F."/>
            <person name="Rieger M."/>
            <person name="Rodrigues-Pousada C."/>
            <person name="Rose M."/>
            <person name="Rupp T."/>
            <person name="Santos M.A."/>
            <person name="Schwager C."/>
            <person name="Sensen C."/>
            <person name="Skala J."/>
            <person name="Soares H."/>
            <person name="Sor F."/>
            <person name="Stegemann J."/>
            <person name="Tettelin H."/>
            <person name="Thierry A."/>
            <person name="Tzermia M."/>
            <person name="Urrestarazu L.A."/>
            <person name="van Dyck L."/>
            <person name="van Vliet-Reedijk J.C."/>
            <person name="Valens M."/>
            <person name="Vandenbol M."/>
            <person name="Vilela C."/>
            <person name="Vissers S."/>
            <person name="von Wettstein D."/>
            <person name="Voss H."/>
            <person name="Wiemann S."/>
            <person name="Xu G."/>
            <person name="Zimmermann J."/>
            <person name="Haasemann M."/>
            <person name="Becker I."/>
            <person name="Mewes H.-W."/>
        </authorList>
    </citation>
    <scope>NUCLEOTIDE SEQUENCE [LARGE SCALE GENOMIC DNA]</scope>
    <source>
        <strain>ATCC 204508 / S288c</strain>
    </source>
</reference>
<reference key="3">
    <citation type="journal article" date="2014" name="G3 (Bethesda)">
        <title>The reference genome sequence of Saccharomyces cerevisiae: Then and now.</title>
        <authorList>
            <person name="Engel S.R."/>
            <person name="Dietrich F.S."/>
            <person name="Fisk D.G."/>
            <person name="Binkley G."/>
            <person name="Balakrishnan R."/>
            <person name="Costanzo M.C."/>
            <person name="Dwight S.S."/>
            <person name="Hitz B.C."/>
            <person name="Karra K."/>
            <person name="Nash R.S."/>
            <person name="Weng S."/>
            <person name="Wong E.D."/>
            <person name="Lloyd P."/>
            <person name="Skrzypek M.S."/>
            <person name="Miyasato S.R."/>
            <person name="Simison M."/>
            <person name="Cherry J.M."/>
        </authorList>
    </citation>
    <scope>GENOME REANNOTATION</scope>
    <source>
        <strain>ATCC 204508 / S288c</strain>
    </source>
</reference>
<reference key="4">
    <citation type="journal article" date="2007" name="Genome Res.">
        <title>Approaching a complete repository of sequence-verified protein-encoding clones for Saccharomyces cerevisiae.</title>
        <authorList>
            <person name="Hu Y."/>
            <person name="Rolfs A."/>
            <person name="Bhullar B."/>
            <person name="Murthy T.V.S."/>
            <person name="Zhu C."/>
            <person name="Berger M.F."/>
            <person name="Camargo A.A."/>
            <person name="Kelley F."/>
            <person name="McCarron S."/>
            <person name="Jepson D."/>
            <person name="Richardson A."/>
            <person name="Raphael J."/>
            <person name="Moreira D."/>
            <person name="Taycher E."/>
            <person name="Zuo D."/>
            <person name="Mohr S."/>
            <person name="Kane M.F."/>
            <person name="Williamson J."/>
            <person name="Simpson A.J.G."/>
            <person name="Bulyk M.L."/>
            <person name="Harlow E."/>
            <person name="Marsischky G."/>
            <person name="Kolodner R.D."/>
            <person name="LaBaer J."/>
        </authorList>
    </citation>
    <scope>NUCLEOTIDE SEQUENCE [GENOMIC DNA]</scope>
    <source>
        <strain>ATCC 204508 / S288c</strain>
    </source>
</reference>
<reference key="5">
    <citation type="journal article" date="1992" name="Yeast">
        <title>The sequence of a 12 kb fragment on the left arm of yeast chromosome XI reveals five new open reading frames, including a zinc finger protein and a homolog of the UDP-glucose pyrophosphorylase from potato.</title>
        <authorList>
            <person name="Purnelle B."/>
            <person name="Skala J."/>
            <person name="van Dyck L."/>
            <person name="Goffeau A."/>
        </authorList>
    </citation>
    <scope>NUCLEOTIDE SEQUENCE [GENOMIC DNA] OF 1-229</scope>
    <source>
        <strain>ATCC 204508 / S288c</strain>
    </source>
</reference>
<reference key="6">
    <citation type="journal article" date="1999" name="Proc. Natl. Acad. Sci. U.S.A.">
        <title>Evidence for a conserved system for iron metabolism in the mitochondria of Saccharomyces cerevisiae.</title>
        <authorList>
            <person name="Schilke B."/>
            <person name="Voisine C."/>
            <person name="Beinert H."/>
            <person name="Craig E."/>
        </authorList>
    </citation>
    <scope>FUNCTION</scope>
    <scope>SUBCELLULAR LOCATION</scope>
</reference>
<reference key="7">
    <citation type="journal article" date="2003" name="Nature">
        <title>Global analysis of protein expression in yeast.</title>
        <authorList>
            <person name="Ghaemmaghami S."/>
            <person name="Huh W.-K."/>
            <person name="Bower K."/>
            <person name="Howson R.W."/>
            <person name="Belle A."/>
            <person name="Dephoure N."/>
            <person name="O'Shea E.K."/>
            <person name="Weissman J.S."/>
        </authorList>
    </citation>
    <scope>LEVEL OF PROTEIN EXPRESSION [LARGE SCALE ANALYSIS]</scope>
</reference>
<reference key="8">
    <citation type="journal article" date="2016" name="Elife">
        <title>Role of Nfu1 and Bol3 in iron-sulfur cluster transfer to mitochondrial clients.</title>
        <authorList>
            <person name="Melber A."/>
            <person name="Na U."/>
            <person name="Vashisht A."/>
            <person name="Weiler B.D."/>
            <person name="Lill R."/>
            <person name="Wohlschlegel J.A."/>
            <person name="Winge D.R."/>
        </authorList>
    </citation>
    <scope>FUNCTION</scope>
    <scope>DISRUPTION PHENOTYPE</scope>
    <scope>INTERACTION WITH BOL3</scope>
    <scope>SUBUNIT</scope>
    <scope>DOMAIN</scope>
    <scope>MUTAGENESIS OF GLY-194 AND 196-CYS--CYS-199</scope>
</reference>
<gene>
    <name type="primary">NFU1</name>
    <name type="synonym">NUB1</name>
    <name type="ordered locus">YKL040C</name>
    <name type="ORF">YKL253</name>
</gene>
<dbReference type="EMBL" id="X71621">
    <property type="status" value="NOT_ANNOTATED_CDS"/>
    <property type="molecule type" value="Genomic_DNA"/>
</dbReference>
<dbReference type="EMBL" id="Z28040">
    <property type="protein sequence ID" value="CAA81875.1"/>
    <property type="molecule type" value="Genomic_DNA"/>
</dbReference>
<dbReference type="EMBL" id="AY557904">
    <property type="protein sequence ID" value="AAS56230.1"/>
    <property type="molecule type" value="Genomic_DNA"/>
</dbReference>
<dbReference type="EMBL" id="X69584">
    <property type="protein sequence ID" value="CAA49299.1"/>
    <property type="molecule type" value="Genomic_DNA"/>
</dbReference>
<dbReference type="EMBL" id="BK006944">
    <property type="protein sequence ID" value="DAA09116.1"/>
    <property type="molecule type" value="Genomic_DNA"/>
</dbReference>
<dbReference type="PIR" id="S37861">
    <property type="entry name" value="S37861"/>
</dbReference>
<dbReference type="RefSeq" id="NP_012884.3">
    <property type="nucleotide sequence ID" value="NM_001179606.3"/>
</dbReference>
<dbReference type="PDB" id="2LTL">
    <property type="method" value="NMR"/>
    <property type="chains" value="A=17-124"/>
</dbReference>
<dbReference type="PDBsum" id="2LTL"/>
<dbReference type="BMRB" id="P32860"/>
<dbReference type="SMR" id="P32860"/>
<dbReference type="BioGRID" id="34092">
    <property type="interactions" value="210"/>
</dbReference>
<dbReference type="FunCoup" id="P32860">
    <property type="interactions" value="415"/>
</dbReference>
<dbReference type="IntAct" id="P32860">
    <property type="interactions" value="5"/>
</dbReference>
<dbReference type="MINT" id="P32860"/>
<dbReference type="STRING" id="4932.YKL040C"/>
<dbReference type="iPTMnet" id="P32860"/>
<dbReference type="PaxDb" id="4932-YKL040C"/>
<dbReference type="PeptideAtlas" id="P32860"/>
<dbReference type="DNASU" id="853826"/>
<dbReference type="EnsemblFungi" id="YKL040C_mRNA">
    <property type="protein sequence ID" value="YKL040C"/>
    <property type="gene ID" value="YKL040C"/>
</dbReference>
<dbReference type="GeneID" id="853826"/>
<dbReference type="KEGG" id="sce:YKL040C"/>
<dbReference type="AGR" id="SGD:S000001523"/>
<dbReference type="SGD" id="S000001523">
    <property type="gene designation" value="NFU1"/>
</dbReference>
<dbReference type="VEuPathDB" id="FungiDB:YKL040C"/>
<dbReference type="eggNOG" id="KOG2358">
    <property type="taxonomic scope" value="Eukaryota"/>
</dbReference>
<dbReference type="GeneTree" id="ENSGT00390000011296"/>
<dbReference type="HOGENOM" id="CLU_060555_0_2_1"/>
<dbReference type="InParanoid" id="P32860"/>
<dbReference type="OMA" id="AIMEHYM"/>
<dbReference type="OrthoDB" id="565552at2759"/>
<dbReference type="BioCyc" id="YEAST:G3O-31841-MONOMER"/>
<dbReference type="BioGRID-ORCS" id="853826">
    <property type="hits" value="0 hits in 10 CRISPR screens"/>
</dbReference>
<dbReference type="CD-CODE" id="E03F929F">
    <property type="entry name" value="Stress granule"/>
</dbReference>
<dbReference type="EvolutionaryTrace" id="P32860"/>
<dbReference type="PRO" id="PR:P32860"/>
<dbReference type="Proteomes" id="UP000002311">
    <property type="component" value="Chromosome XI"/>
</dbReference>
<dbReference type="RNAct" id="P32860">
    <property type="molecule type" value="protein"/>
</dbReference>
<dbReference type="GO" id="GO:0005759">
    <property type="term" value="C:mitochondrial matrix"/>
    <property type="evidence" value="ECO:0000314"/>
    <property type="project" value="SGD"/>
</dbReference>
<dbReference type="GO" id="GO:0005739">
    <property type="term" value="C:mitochondrion"/>
    <property type="evidence" value="ECO:0007005"/>
    <property type="project" value="SGD"/>
</dbReference>
<dbReference type="GO" id="GO:0051539">
    <property type="term" value="F:4 iron, 4 sulfur cluster binding"/>
    <property type="evidence" value="ECO:0000318"/>
    <property type="project" value="GO_Central"/>
</dbReference>
<dbReference type="GO" id="GO:0005506">
    <property type="term" value="F:iron ion binding"/>
    <property type="evidence" value="ECO:0007669"/>
    <property type="project" value="InterPro"/>
</dbReference>
<dbReference type="GO" id="GO:0044572">
    <property type="term" value="P:[4Fe-4S] cluster assembly"/>
    <property type="evidence" value="ECO:0000315"/>
    <property type="project" value="SGD"/>
</dbReference>
<dbReference type="GO" id="GO:0016226">
    <property type="term" value="P:iron-sulfur cluster assembly"/>
    <property type="evidence" value="ECO:0000315"/>
    <property type="project" value="SGD"/>
</dbReference>
<dbReference type="FunFam" id="3.30.300.130:FF:000001">
    <property type="entry name" value="NFU1 iron-sulfur cluster scaffold"/>
    <property type="match status" value="1"/>
</dbReference>
<dbReference type="FunFam" id="3.30.1370.70:FF:000003">
    <property type="entry name" value="Nfu1p"/>
    <property type="match status" value="1"/>
</dbReference>
<dbReference type="Gene3D" id="3.30.300.130">
    <property type="entry name" value="Fe-S cluster assembly (FSCA)"/>
    <property type="match status" value="1"/>
</dbReference>
<dbReference type="Gene3D" id="3.30.1370.70">
    <property type="entry name" value="Scaffold protein Nfu/NifU, N-terminal domain"/>
    <property type="match status" value="1"/>
</dbReference>
<dbReference type="InterPro" id="IPR034904">
    <property type="entry name" value="FSCA_dom_sf"/>
</dbReference>
<dbReference type="InterPro" id="IPR014824">
    <property type="entry name" value="Nfu/NifU_N"/>
</dbReference>
<dbReference type="InterPro" id="IPR036498">
    <property type="entry name" value="Nfu/NifU_N_sf"/>
</dbReference>
<dbReference type="InterPro" id="IPR035433">
    <property type="entry name" value="NFU1-like"/>
</dbReference>
<dbReference type="InterPro" id="IPR001075">
    <property type="entry name" value="NIF_FeS_clus_asmbl_NifU_C"/>
</dbReference>
<dbReference type="PANTHER" id="PTHR11178">
    <property type="entry name" value="IRON-SULFUR CLUSTER SCAFFOLD PROTEIN NFU-RELATED"/>
    <property type="match status" value="1"/>
</dbReference>
<dbReference type="PANTHER" id="PTHR11178:SF1">
    <property type="entry name" value="NFU1 IRON-SULFUR CLUSTER SCAFFOLD HOMOLOG, MITOCHONDRIAL"/>
    <property type="match status" value="1"/>
</dbReference>
<dbReference type="Pfam" id="PF08712">
    <property type="entry name" value="Nfu_N"/>
    <property type="match status" value="1"/>
</dbReference>
<dbReference type="Pfam" id="PF01106">
    <property type="entry name" value="NifU"/>
    <property type="match status" value="1"/>
</dbReference>
<dbReference type="PIRSF" id="PIRSF036773">
    <property type="entry name" value="HIRIP5"/>
    <property type="match status" value="1"/>
</dbReference>
<dbReference type="SMART" id="SM00932">
    <property type="entry name" value="Nfu_N"/>
    <property type="match status" value="1"/>
</dbReference>
<dbReference type="SUPFAM" id="SSF117916">
    <property type="entry name" value="Fe-S cluster assembly (FSCA) domain-like"/>
    <property type="match status" value="1"/>
</dbReference>
<dbReference type="SUPFAM" id="SSF110836">
    <property type="entry name" value="Hypothetical protein SAV1430"/>
    <property type="match status" value="1"/>
</dbReference>
<keyword id="KW-0002">3D-structure</keyword>
<keyword id="KW-0496">Mitochondrion</keyword>
<keyword id="KW-1185">Reference proteome</keyword>
<keyword id="KW-0809">Transit peptide</keyword>
<comment type="function">
    <text evidence="2 4">Involved in iron homeostasis within the mitochondrion where it is involved in the assembly of iron-sulfur proteins (PubMed:10468587, PubMed:27532773). Together with BOL3, required during the last step of iron-sulfur protein assembly when the iron-sulfur cluster is inserted into the target protein (PubMed:27532773). Required for protecting iron sulfur clusters from oxidative damage (PubMed:27532773).</text>
</comment>
<comment type="subunit">
    <text evidence="4">Homodimer; in absence of BOL3, probably bridged by an iron-sulfure cluster (PubMed:27532773). Interacts with BOL3 (PubMed:27532773). Interacts with apo-target proteins, such as ACO1, LYS4, ACO2 and SDH2 (PubMed:27532773).</text>
</comment>
<comment type="interaction">
    <interactant intactId="EBI-2343533">
        <id>P32860</id>
    </interactant>
    <interactant intactId="EBI-2109">
        <id>P39533</id>
        <label>ACO2</label>
    </interactant>
    <organismsDiffer>false</organismsDiffer>
    <experiments>2</experiments>
</comment>
<comment type="subcellular location">
    <subcellularLocation>
        <location evidence="2">Mitochondrion matrix</location>
    </subcellularLocation>
</comment>
<comment type="domain">
    <text evidence="6">The CxxC motif may bind a [4Fe-4S] cluster.</text>
</comment>
<comment type="disruption phenotype">
    <text evidence="4">Cells are impaired in growth on synthetic complete medium with acetate as a carbon source due to defects in mitochondrial [4Fe-4S] cluster formation.</text>
</comment>
<comment type="miscellaneous">
    <text evidence="3">Present with 11300 molecules/cell in log phase SD medium.</text>
</comment>
<comment type="similarity">
    <text evidence="5">Belongs to the NifU family.</text>
</comment>